<proteinExistence type="inferred from homology"/>
<feature type="chain" id="PRO_0000347427" description="Urease accessory protein UreG">
    <location>
        <begin position="1"/>
        <end position="207"/>
    </location>
</feature>
<feature type="binding site" evidence="1">
    <location>
        <begin position="14"/>
        <end position="21"/>
    </location>
    <ligand>
        <name>GTP</name>
        <dbReference type="ChEBI" id="CHEBI:37565"/>
    </ligand>
</feature>
<organism>
    <name type="scientific">Pseudomonas putida (strain ATCC 47054 / DSM 6125 / CFBP 8728 / NCIMB 11950 / KT2440)</name>
    <dbReference type="NCBI Taxonomy" id="160488"/>
    <lineage>
        <taxon>Bacteria</taxon>
        <taxon>Pseudomonadati</taxon>
        <taxon>Pseudomonadota</taxon>
        <taxon>Gammaproteobacteria</taxon>
        <taxon>Pseudomonadales</taxon>
        <taxon>Pseudomonadaceae</taxon>
        <taxon>Pseudomonas</taxon>
    </lineage>
</organism>
<comment type="function">
    <text evidence="1">Facilitates the functional incorporation of the urease nickel metallocenter. This process requires GTP hydrolysis, probably effectuated by UreG.</text>
</comment>
<comment type="subunit">
    <text evidence="1">Homodimer. UreD, UreF and UreG form a complex that acts as a GTP-hydrolysis-dependent molecular chaperone, activating the urease apoprotein by helping to assemble the nickel containing metallocenter of UreC. The UreE protein probably delivers the nickel.</text>
</comment>
<comment type="subcellular location">
    <subcellularLocation>
        <location evidence="1">Cytoplasm</location>
    </subcellularLocation>
</comment>
<comment type="similarity">
    <text evidence="1">Belongs to the SIMIBI class G3E GTPase family. UreG subfamily.</text>
</comment>
<dbReference type="EMBL" id="AE015451">
    <property type="protein sequence ID" value="AAN68457.1"/>
    <property type="molecule type" value="Genomic_DNA"/>
</dbReference>
<dbReference type="RefSeq" id="NP_744993.1">
    <property type="nucleotide sequence ID" value="NC_002947.4"/>
</dbReference>
<dbReference type="RefSeq" id="WP_010953755.1">
    <property type="nucleotide sequence ID" value="NZ_CP169744.1"/>
</dbReference>
<dbReference type="SMR" id="Q88J00"/>
<dbReference type="STRING" id="160488.PP_2849"/>
<dbReference type="PaxDb" id="160488-PP_2849"/>
<dbReference type="GeneID" id="97167996"/>
<dbReference type="KEGG" id="ppu:PP_2849"/>
<dbReference type="PATRIC" id="fig|160488.4.peg.3022"/>
<dbReference type="eggNOG" id="COG0378">
    <property type="taxonomic scope" value="Bacteria"/>
</dbReference>
<dbReference type="HOGENOM" id="CLU_072144_1_0_6"/>
<dbReference type="OrthoDB" id="9802035at2"/>
<dbReference type="PhylomeDB" id="Q88J00"/>
<dbReference type="BioCyc" id="PPUT160488:G1G01-3029-MONOMER"/>
<dbReference type="Proteomes" id="UP000000556">
    <property type="component" value="Chromosome"/>
</dbReference>
<dbReference type="GO" id="GO:0005737">
    <property type="term" value="C:cytoplasm"/>
    <property type="evidence" value="ECO:0007669"/>
    <property type="project" value="UniProtKB-SubCell"/>
</dbReference>
<dbReference type="GO" id="GO:0005525">
    <property type="term" value="F:GTP binding"/>
    <property type="evidence" value="ECO:0007669"/>
    <property type="project" value="UniProtKB-KW"/>
</dbReference>
<dbReference type="GO" id="GO:0003924">
    <property type="term" value="F:GTPase activity"/>
    <property type="evidence" value="ECO:0007669"/>
    <property type="project" value="InterPro"/>
</dbReference>
<dbReference type="GO" id="GO:0016151">
    <property type="term" value="F:nickel cation binding"/>
    <property type="evidence" value="ECO:0007669"/>
    <property type="project" value="UniProtKB-UniRule"/>
</dbReference>
<dbReference type="GO" id="GO:0043419">
    <property type="term" value="P:urea catabolic process"/>
    <property type="evidence" value="ECO:0007669"/>
    <property type="project" value="InterPro"/>
</dbReference>
<dbReference type="CDD" id="cd05540">
    <property type="entry name" value="UreG"/>
    <property type="match status" value="1"/>
</dbReference>
<dbReference type="FunFam" id="3.40.50.300:FF:000208">
    <property type="entry name" value="Urease accessory protein UreG"/>
    <property type="match status" value="1"/>
</dbReference>
<dbReference type="Gene3D" id="3.40.50.300">
    <property type="entry name" value="P-loop containing nucleotide triphosphate hydrolases"/>
    <property type="match status" value="1"/>
</dbReference>
<dbReference type="HAMAP" id="MF_01389">
    <property type="entry name" value="UreG"/>
    <property type="match status" value="1"/>
</dbReference>
<dbReference type="InterPro" id="IPR003495">
    <property type="entry name" value="CobW/HypB/UreG_nucleotide-bd"/>
</dbReference>
<dbReference type="InterPro" id="IPR027417">
    <property type="entry name" value="P-loop_NTPase"/>
</dbReference>
<dbReference type="InterPro" id="IPR004400">
    <property type="entry name" value="UreG"/>
</dbReference>
<dbReference type="NCBIfam" id="TIGR00101">
    <property type="entry name" value="ureG"/>
    <property type="match status" value="1"/>
</dbReference>
<dbReference type="PANTHER" id="PTHR31715">
    <property type="entry name" value="UREASE ACCESSORY PROTEIN G"/>
    <property type="match status" value="1"/>
</dbReference>
<dbReference type="PANTHER" id="PTHR31715:SF0">
    <property type="entry name" value="UREASE ACCESSORY PROTEIN G"/>
    <property type="match status" value="1"/>
</dbReference>
<dbReference type="Pfam" id="PF02492">
    <property type="entry name" value="cobW"/>
    <property type="match status" value="1"/>
</dbReference>
<dbReference type="PIRSF" id="PIRSF005624">
    <property type="entry name" value="Ni-bind_GTPase"/>
    <property type="match status" value="1"/>
</dbReference>
<dbReference type="SUPFAM" id="SSF52540">
    <property type="entry name" value="P-loop containing nucleoside triphosphate hydrolases"/>
    <property type="match status" value="1"/>
</dbReference>
<reference key="1">
    <citation type="journal article" date="2002" name="Environ. Microbiol.">
        <title>Complete genome sequence and comparative analysis of the metabolically versatile Pseudomonas putida KT2440.</title>
        <authorList>
            <person name="Nelson K.E."/>
            <person name="Weinel C."/>
            <person name="Paulsen I.T."/>
            <person name="Dodson R.J."/>
            <person name="Hilbert H."/>
            <person name="Martins dos Santos V.A.P."/>
            <person name="Fouts D.E."/>
            <person name="Gill S.R."/>
            <person name="Pop M."/>
            <person name="Holmes M."/>
            <person name="Brinkac L.M."/>
            <person name="Beanan M.J."/>
            <person name="DeBoy R.T."/>
            <person name="Daugherty S.C."/>
            <person name="Kolonay J.F."/>
            <person name="Madupu R."/>
            <person name="Nelson W.C."/>
            <person name="White O."/>
            <person name="Peterson J.D."/>
            <person name="Khouri H.M."/>
            <person name="Hance I."/>
            <person name="Chris Lee P."/>
            <person name="Holtzapple E.K."/>
            <person name="Scanlan D."/>
            <person name="Tran K."/>
            <person name="Moazzez A."/>
            <person name="Utterback T.R."/>
            <person name="Rizzo M."/>
            <person name="Lee K."/>
            <person name="Kosack D."/>
            <person name="Moestl D."/>
            <person name="Wedler H."/>
            <person name="Lauber J."/>
            <person name="Stjepandic D."/>
            <person name="Hoheisel J."/>
            <person name="Straetz M."/>
            <person name="Heim S."/>
            <person name="Kiewitz C."/>
            <person name="Eisen J.A."/>
            <person name="Timmis K.N."/>
            <person name="Duesterhoeft A."/>
            <person name="Tuemmler B."/>
            <person name="Fraser C.M."/>
        </authorList>
    </citation>
    <scope>NUCLEOTIDE SEQUENCE [LARGE SCALE GENOMIC DNA]</scope>
    <source>
        <strain>ATCC 47054 / DSM 6125 / CFBP 8728 / NCIMB 11950 / KT2440</strain>
    </source>
</reference>
<evidence type="ECO:0000255" key="1">
    <source>
        <dbReference type="HAMAP-Rule" id="MF_01389"/>
    </source>
</evidence>
<gene>
    <name evidence="1" type="primary">ureG</name>
    <name type="ordered locus">PP_2849</name>
</gene>
<protein>
    <recommendedName>
        <fullName evidence="1">Urease accessory protein UreG</fullName>
    </recommendedName>
</protein>
<accession>Q88J00</accession>
<keyword id="KW-0143">Chaperone</keyword>
<keyword id="KW-0963">Cytoplasm</keyword>
<keyword id="KW-0342">GTP-binding</keyword>
<keyword id="KW-0996">Nickel insertion</keyword>
<keyword id="KW-0547">Nucleotide-binding</keyword>
<keyword id="KW-1185">Reference proteome</keyword>
<sequence>MQSYQQPLRVGVGGPVGSGKTALLEALCKAMRDHYQIAVVTNDIYTKEDQRILTEAGALEPERIVGVETGGCPHTAIREDASMNLAAVEALARKFGNLEVIFVESGGDNLSATFSPELADLTIYVIDVAEGEKIPRKGGPGITKSDFLVINKTDLAPYVGASLEVMERDTQRMRPQRPWTFSNLKKGEGLQAVIDFIVERGMLGVRG</sequence>
<name>UREG_PSEPK</name>